<name>MMTA2_MOUSE</name>
<sequence length="260" mass="29299">MFGSNRGGVRGGQDQFNWEDVKTDKQRENYLGNSLMAPVGRWQKGRDLTWYAKDRAPCTGPSREEELAAVREAEREALLAALGYKNVRKQPTGLSKEDFVEICKREGGDPEEKGVDRLLGLGSASGSAGRVALSREDKEAAKLGLSVFTHHRVDSEGPSTAPTAPRKKPRAEDKVEPDAESHKKSKKEKKKKKKKHKKHKKKKDKEHKREADSCSSSPSPPRPRHQRHSDFSPCSKRKREHSQDSGRNPSRRRQDRSSDD</sequence>
<accession>Q99LX5</accession>
<accession>Q9CSK6</accession>
<evidence type="ECO:0000250" key="1">
    <source>
        <dbReference type="UniProtKB" id="Q9BU76"/>
    </source>
</evidence>
<evidence type="ECO:0000256" key="2">
    <source>
        <dbReference type="SAM" id="MobiDB-lite"/>
    </source>
</evidence>
<keyword id="KW-1017">Isopeptide bond</keyword>
<keyword id="KW-0597">Phosphoprotein</keyword>
<keyword id="KW-1185">Reference proteome</keyword>
<keyword id="KW-0832">Ubl conjugation</keyword>
<feature type="chain" id="PRO_0000096519" description="Multiple myeloma tumor-associated protein 2 homolog">
    <location>
        <begin position="1"/>
        <end position="260"/>
    </location>
</feature>
<feature type="region of interest" description="Disordered" evidence="2">
    <location>
        <begin position="1"/>
        <end position="21"/>
    </location>
</feature>
<feature type="region of interest" description="Disordered" evidence="2">
    <location>
        <begin position="106"/>
        <end position="133"/>
    </location>
</feature>
<feature type="region of interest" description="Disordered" evidence="2">
    <location>
        <begin position="146"/>
        <end position="260"/>
    </location>
</feature>
<feature type="compositionally biased region" description="Gly residues" evidence="2">
    <location>
        <begin position="1"/>
        <end position="11"/>
    </location>
</feature>
<feature type="compositionally biased region" description="Basic and acidic residues" evidence="2">
    <location>
        <begin position="106"/>
        <end position="116"/>
    </location>
</feature>
<feature type="compositionally biased region" description="Low complexity" evidence="2">
    <location>
        <begin position="117"/>
        <end position="132"/>
    </location>
</feature>
<feature type="compositionally biased region" description="Basic and acidic residues" evidence="2">
    <location>
        <begin position="170"/>
        <end position="182"/>
    </location>
</feature>
<feature type="compositionally biased region" description="Basic residues" evidence="2">
    <location>
        <begin position="183"/>
        <end position="206"/>
    </location>
</feature>
<feature type="modified residue" description="Phosphoserine" evidence="1">
    <location>
        <position position="123"/>
    </location>
</feature>
<feature type="modified residue" description="Phosphoserine" evidence="1">
    <location>
        <position position="127"/>
    </location>
</feature>
<feature type="modified residue" description="Phosphoserine" evidence="1">
    <location>
        <position position="215"/>
    </location>
</feature>
<feature type="modified residue" description="Phosphoserine" evidence="1">
    <location>
        <position position="216"/>
    </location>
</feature>
<feature type="modified residue" description="Phosphoserine" evidence="1">
    <location>
        <position position="219"/>
    </location>
</feature>
<feature type="cross-link" description="Glycyl lysine isopeptide (Lys-Gly) (interchain with G-Cter in SUMO2)" evidence="1">
    <location>
        <position position="22"/>
    </location>
</feature>
<feature type="cross-link" description="Glycyl lysine isopeptide (Lys-Gly) (interchain with G-Cter in SUMO2)" evidence="1">
    <location>
        <position position="104"/>
    </location>
</feature>
<feature type="cross-link" description="Glycyl lysine isopeptide (Lys-Gly) (interchain with G-Cter in SUMO2)" evidence="1">
    <location>
        <position position="113"/>
    </location>
</feature>
<proteinExistence type="evidence at transcript level"/>
<protein>
    <recommendedName>
        <fullName>Multiple myeloma tumor-associated protein 2 homolog</fullName>
    </recommendedName>
</protein>
<organism>
    <name type="scientific">Mus musculus</name>
    <name type="common">Mouse</name>
    <dbReference type="NCBI Taxonomy" id="10090"/>
    <lineage>
        <taxon>Eukaryota</taxon>
        <taxon>Metazoa</taxon>
        <taxon>Chordata</taxon>
        <taxon>Craniata</taxon>
        <taxon>Vertebrata</taxon>
        <taxon>Euteleostomi</taxon>
        <taxon>Mammalia</taxon>
        <taxon>Eutheria</taxon>
        <taxon>Euarchontoglires</taxon>
        <taxon>Glires</taxon>
        <taxon>Rodentia</taxon>
        <taxon>Myomorpha</taxon>
        <taxon>Muroidea</taxon>
        <taxon>Muridae</taxon>
        <taxon>Murinae</taxon>
        <taxon>Mus</taxon>
        <taxon>Mus</taxon>
    </lineage>
</organism>
<gene>
    <name type="primary">Mmtag2</name>
</gene>
<reference key="1">
    <citation type="journal article" date="2004" name="Genome Res.">
        <title>The status, quality, and expansion of the NIH full-length cDNA project: the Mammalian Gene Collection (MGC).</title>
        <authorList>
            <consortium name="The MGC Project Team"/>
        </authorList>
    </citation>
    <scope>NUCLEOTIDE SEQUENCE [LARGE SCALE MRNA]</scope>
    <source>
        <strain>FVB/N</strain>
        <tissue>Mammary tumor</tissue>
    </source>
</reference>
<reference key="2">
    <citation type="journal article" date="2005" name="Science">
        <title>The transcriptional landscape of the mammalian genome.</title>
        <authorList>
            <person name="Carninci P."/>
            <person name="Kasukawa T."/>
            <person name="Katayama S."/>
            <person name="Gough J."/>
            <person name="Frith M.C."/>
            <person name="Maeda N."/>
            <person name="Oyama R."/>
            <person name="Ravasi T."/>
            <person name="Lenhard B."/>
            <person name="Wells C."/>
            <person name="Kodzius R."/>
            <person name="Shimokawa K."/>
            <person name="Bajic V.B."/>
            <person name="Brenner S.E."/>
            <person name="Batalov S."/>
            <person name="Forrest A.R."/>
            <person name="Zavolan M."/>
            <person name="Davis M.J."/>
            <person name="Wilming L.G."/>
            <person name="Aidinis V."/>
            <person name="Allen J.E."/>
            <person name="Ambesi-Impiombato A."/>
            <person name="Apweiler R."/>
            <person name="Aturaliya R.N."/>
            <person name="Bailey T.L."/>
            <person name="Bansal M."/>
            <person name="Baxter L."/>
            <person name="Beisel K.W."/>
            <person name="Bersano T."/>
            <person name="Bono H."/>
            <person name="Chalk A.M."/>
            <person name="Chiu K.P."/>
            <person name="Choudhary V."/>
            <person name="Christoffels A."/>
            <person name="Clutterbuck D.R."/>
            <person name="Crowe M.L."/>
            <person name="Dalla E."/>
            <person name="Dalrymple B.P."/>
            <person name="de Bono B."/>
            <person name="Della Gatta G."/>
            <person name="di Bernardo D."/>
            <person name="Down T."/>
            <person name="Engstrom P."/>
            <person name="Fagiolini M."/>
            <person name="Faulkner G."/>
            <person name="Fletcher C.F."/>
            <person name="Fukushima T."/>
            <person name="Furuno M."/>
            <person name="Futaki S."/>
            <person name="Gariboldi M."/>
            <person name="Georgii-Hemming P."/>
            <person name="Gingeras T.R."/>
            <person name="Gojobori T."/>
            <person name="Green R.E."/>
            <person name="Gustincich S."/>
            <person name="Harbers M."/>
            <person name="Hayashi Y."/>
            <person name="Hensch T.K."/>
            <person name="Hirokawa N."/>
            <person name="Hill D."/>
            <person name="Huminiecki L."/>
            <person name="Iacono M."/>
            <person name="Ikeo K."/>
            <person name="Iwama A."/>
            <person name="Ishikawa T."/>
            <person name="Jakt M."/>
            <person name="Kanapin A."/>
            <person name="Katoh M."/>
            <person name="Kawasawa Y."/>
            <person name="Kelso J."/>
            <person name="Kitamura H."/>
            <person name="Kitano H."/>
            <person name="Kollias G."/>
            <person name="Krishnan S.P."/>
            <person name="Kruger A."/>
            <person name="Kummerfeld S.K."/>
            <person name="Kurochkin I.V."/>
            <person name="Lareau L.F."/>
            <person name="Lazarevic D."/>
            <person name="Lipovich L."/>
            <person name="Liu J."/>
            <person name="Liuni S."/>
            <person name="McWilliam S."/>
            <person name="Madan Babu M."/>
            <person name="Madera M."/>
            <person name="Marchionni L."/>
            <person name="Matsuda H."/>
            <person name="Matsuzawa S."/>
            <person name="Miki H."/>
            <person name="Mignone F."/>
            <person name="Miyake S."/>
            <person name="Morris K."/>
            <person name="Mottagui-Tabar S."/>
            <person name="Mulder N."/>
            <person name="Nakano N."/>
            <person name="Nakauchi H."/>
            <person name="Ng P."/>
            <person name="Nilsson R."/>
            <person name="Nishiguchi S."/>
            <person name="Nishikawa S."/>
            <person name="Nori F."/>
            <person name="Ohara O."/>
            <person name="Okazaki Y."/>
            <person name="Orlando V."/>
            <person name="Pang K.C."/>
            <person name="Pavan W.J."/>
            <person name="Pavesi G."/>
            <person name="Pesole G."/>
            <person name="Petrovsky N."/>
            <person name="Piazza S."/>
            <person name="Reed J."/>
            <person name="Reid J.F."/>
            <person name="Ring B.Z."/>
            <person name="Ringwald M."/>
            <person name="Rost B."/>
            <person name="Ruan Y."/>
            <person name="Salzberg S.L."/>
            <person name="Sandelin A."/>
            <person name="Schneider C."/>
            <person name="Schoenbach C."/>
            <person name="Sekiguchi K."/>
            <person name="Semple C.A."/>
            <person name="Seno S."/>
            <person name="Sessa L."/>
            <person name="Sheng Y."/>
            <person name="Shibata Y."/>
            <person name="Shimada H."/>
            <person name="Shimada K."/>
            <person name="Silva D."/>
            <person name="Sinclair B."/>
            <person name="Sperling S."/>
            <person name="Stupka E."/>
            <person name="Sugiura K."/>
            <person name="Sultana R."/>
            <person name="Takenaka Y."/>
            <person name="Taki K."/>
            <person name="Tammoja K."/>
            <person name="Tan S.L."/>
            <person name="Tang S."/>
            <person name="Taylor M.S."/>
            <person name="Tegner J."/>
            <person name="Teichmann S.A."/>
            <person name="Ueda H.R."/>
            <person name="van Nimwegen E."/>
            <person name="Verardo R."/>
            <person name="Wei C.L."/>
            <person name="Yagi K."/>
            <person name="Yamanishi H."/>
            <person name="Zabarovsky E."/>
            <person name="Zhu S."/>
            <person name="Zimmer A."/>
            <person name="Hide W."/>
            <person name="Bult C."/>
            <person name="Grimmond S.M."/>
            <person name="Teasdale R.D."/>
            <person name="Liu E.T."/>
            <person name="Brusic V."/>
            <person name="Quackenbush J."/>
            <person name="Wahlestedt C."/>
            <person name="Mattick J.S."/>
            <person name="Hume D.A."/>
            <person name="Kai C."/>
            <person name="Sasaki D."/>
            <person name="Tomaru Y."/>
            <person name="Fukuda S."/>
            <person name="Kanamori-Katayama M."/>
            <person name="Suzuki M."/>
            <person name="Aoki J."/>
            <person name="Arakawa T."/>
            <person name="Iida J."/>
            <person name="Imamura K."/>
            <person name="Itoh M."/>
            <person name="Kato T."/>
            <person name="Kawaji H."/>
            <person name="Kawagashira N."/>
            <person name="Kawashima T."/>
            <person name="Kojima M."/>
            <person name="Kondo S."/>
            <person name="Konno H."/>
            <person name="Nakano K."/>
            <person name="Ninomiya N."/>
            <person name="Nishio T."/>
            <person name="Okada M."/>
            <person name="Plessy C."/>
            <person name="Shibata K."/>
            <person name="Shiraki T."/>
            <person name="Suzuki S."/>
            <person name="Tagami M."/>
            <person name="Waki K."/>
            <person name="Watahiki A."/>
            <person name="Okamura-Oho Y."/>
            <person name="Suzuki H."/>
            <person name="Kawai J."/>
            <person name="Hayashizaki Y."/>
        </authorList>
    </citation>
    <scope>NUCLEOTIDE SEQUENCE [LARGE SCALE MRNA] OF 1-186</scope>
    <source>
        <strain>C57BL/6J</strain>
        <tissue>Embryo</tissue>
    </source>
</reference>
<dbReference type="EMBL" id="BC002181">
    <property type="protein sequence ID" value="AAH02181.1"/>
    <property type="molecule type" value="mRNA"/>
</dbReference>
<dbReference type="EMBL" id="AK012628">
    <property type="protein sequence ID" value="BAB28366.1"/>
    <property type="molecule type" value="mRNA"/>
</dbReference>
<dbReference type="CCDS" id="CCDS24764.1"/>
<dbReference type="RefSeq" id="NP_077172.1">
    <property type="nucleotide sequence ID" value="NM_024210.2"/>
</dbReference>
<dbReference type="SMR" id="Q99LX5"/>
<dbReference type="BioGRID" id="212489">
    <property type="interactions" value="3"/>
</dbReference>
<dbReference type="FunCoup" id="Q99LX5">
    <property type="interactions" value="58"/>
</dbReference>
<dbReference type="STRING" id="10090.ENSMUSP00000020719"/>
<dbReference type="iPTMnet" id="Q99LX5"/>
<dbReference type="PhosphoSitePlus" id="Q99LX5"/>
<dbReference type="jPOST" id="Q99LX5"/>
<dbReference type="PaxDb" id="10090-ENSMUSP00000020719"/>
<dbReference type="PeptideAtlas" id="Q99LX5"/>
<dbReference type="ProteomicsDB" id="295961"/>
<dbReference type="Pumba" id="Q99LX5"/>
<dbReference type="Antibodypedia" id="52229">
    <property type="antibodies" value="62 antibodies from 20 providers"/>
</dbReference>
<dbReference type="DNASU" id="67862"/>
<dbReference type="Ensembl" id="ENSMUST00000020719.7">
    <property type="protein sequence ID" value="ENSMUSP00000020719.7"/>
    <property type="gene ID" value="ENSMUSG00000020441.7"/>
</dbReference>
<dbReference type="GeneID" id="67862"/>
<dbReference type="KEGG" id="mmu:67862"/>
<dbReference type="UCSC" id="uc007jdl.1">
    <property type="organism name" value="mouse"/>
</dbReference>
<dbReference type="AGR" id="MGI:1915112"/>
<dbReference type="MGI" id="MGI:1915112">
    <property type="gene designation" value="2310033P09Rik"/>
</dbReference>
<dbReference type="VEuPathDB" id="HostDB:ENSMUSG00000020441"/>
<dbReference type="eggNOG" id="KOG4520">
    <property type="taxonomic scope" value="Eukaryota"/>
</dbReference>
<dbReference type="GeneTree" id="ENSGT00390000005590"/>
<dbReference type="HOGENOM" id="CLU_061193_0_1_1"/>
<dbReference type="InParanoid" id="Q99LX5"/>
<dbReference type="OMA" id="THHRVDR"/>
<dbReference type="OrthoDB" id="5390672at2759"/>
<dbReference type="PhylomeDB" id="Q99LX5"/>
<dbReference type="TreeFam" id="TF332234"/>
<dbReference type="Reactome" id="R-MMU-6798695">
    <property type="pathway name" value="Neutrophil degranulation"/>
</dbReference>
<dbReference type="BioGRID-ORCS" id="67862">
    <property type="hits" value="4 hits in 80 CRISPR screens"/>
</dbReference>
<dbReference type="PRO" id="PR:Q99LX5"/>
<dbReference type="Proteomes" id="UP000000589">
    <property type="component" value="Chromosome 11"/>
</dbReference>
<dbReference type="RNAct" id="Q99LX5">
    <property type="molecule type" value="protein"/>
</dbReference>
<dbReference type="Bgee" id="ENSMUSG00000020441">
    <property type="expression patterns" value="Expressed in animal zygote and 264 other cell types or tissues"/>
</dbReference>
<dbReference type="InterPro" id="IPR019315">
    <property type="entry name" value="MMTA2_N"/>
</dbReference>
<dbReference type="InterPro" id="IPR039207">
    <property type="entry name" value="MMTAG2-like"/>
</dbReference>
<dbReference type="PANTHER" id="PTHR14580:SF0">
    <property type="entry name" value="MULTIPLE MYELOMA TUMOR-ASSOCIATED PROTEIN 2"/>
    <property type="match status" value="1"/>
</dbReference>
<dbReference type="PANTHER" id="PTHR14580">
    <property type="entry name" value="MULTIPLE MYELOMA TUMOR-ASSOCIATED PROTEIN 2 FAMILY MEMBER"/>
    <property type="match status" value="1"/>
</dbReference>
<dbReference type="Pfam" id="PF10159">
    <property type="entry name" value="MMtag"/>
    <property type="match status" value="1"/>
</dbReference>